<sequence length="453" mass="49388">MALWGGRFSQESSALFKLFNDSLPVDYRLVEEDIVGSIAWADAITGVGILSQQECQSLKQALQELLAEVKDQPETILASGAEDTHSFVEQALIAKVGDLGKKLHTGRSRNDQVATDLKLWCKKEGKALLELLAQLKAALLSLAERELDAVMPGYTHLQRAQPVAFGHWCLAYVEMFERDISRLQDCLQRLDTCPLGTGALAGTAYPMDRYALAKSLGFASPTLNSLDSVSDRDHVIELCSDAAISMMHLSRMAEDLIFFNSGEAGFIELDDQVTSGSSLMPQKKNPDALELIRGKTGRVYGSLMGILTTMKALPLAYNKDMQEDKEGLFDVMDSWSICLEMAALVLSGLKVNRENTLSAAQQGYANATELADYLVAKGMPFREAHHVVGEVVVEAIAQKKPIEEFELASLQVFASVIQEDVYQCLTIDSCLAKREALGGTSLTQVKAALAAKG</sequence>
<proteinExistence type="inferred from homology"/>
<evidence type="ECO:0000255" key="1">
    <source>
        <dbReference type="HAMAP-Rule" id="MF_00006"/>
    </source>
</evidence>
<protein>
    <recommendedName>
        <fullName evidence="1">Argininosuccinate lyase</fullName>
        <shortName evidence="1">ASAL</shortName>
        <ecNumber evidence="1">4.3.2.1</ecNumber>
    </recommendedName>
    <alternativeName>
        <fullName evidence="1">Arginosuccinase</fullName>
    </alternativeName>
</protein>
<comment type="catalytic activity">
    <reaction evidence="1">
        <text>2-(N(omega)-L-arginino)succinate = fumarate + L-arginine</text>
        <dbReference type="Rhea" id="RHEA:24020"/>
        <dbReference type="ChEBI" id="CHEBI:29806"/>
        <dbReference type="ChEBI" id="CHEBI:32682"/>
        <dbReference type="ChEBI" id="CHEBI:57472"/>
        <dbReference type="EC" id="4.3.2.1"/>
    </reaction>
</comment>
<comment type="pathway">
    <text evidence="1">Amino-acid biosynthesis; L-arginine biosynthesis; L-arginine from L-ornithine and carbamoyl phosphate: step 3/3.</text>
</comment>
<comment type="subcellular location">
    <subcellularLocation>
        <location evidence="1">Cytoplasm</location>
    </subcellularLocation>
</comment>
<comment type="similarity">
    <text evidence="1">Belongs to the lyase 1 family. Argininosuccinate lyase subfamily.</text>
</comment>
<keyword id="KW-0028">Amino-acid biosynthesis</keyword>
<keyword id="KW-0055">Arginine biosynthesis</keyword>
<keyword id="KW-0963">Cytoplasm</keyword>
<keyword id="KW-0456">Lyase</keyword>
<keyword id="KW-1185">Reference proteome</keyword>
<feature type="chain" id="PRO_1000000538" description="Argininosuccinate lyase">
    <location>
        <begin position="1"/>
        <end position="453"/>
    </location>
</feature>
<dbReference type="EC" id="4.3.2.1" evidence="1"/>
<dbReference type="EMBL" id="CP000606">
    <property type="protein sequence ID" value="ABO22078.1"/>
    <property type="molecule type" value="Genomic_DNA"/>
</dbReference>
<dbReference type="RefSeq" id="WP_011864013.1">
    <property type="nucleotide sequence ID" value="NC_009092.1"/>
</dbReference>
<dbReference type="SMR" id="A3Q9D0"/>
<dbReference type="STRING" id="323850.Shew_0206"/>
<dbReference type="KEGG" id="slo:Shew_0206"/>
<dbReference type="eggNOG" id="COG0165">
    <property type="taxonomic scope" value="Bacteria"/>
</dbReference>
<dbReference type="HOGENOM" id="CLU_027272_2_3_6"/>
<dbReference type="OrthoDB" id="9769623at2"/>
<dbReference type="UniPathway" id="UPA00068">
    <property type="reaction ID" value="UER00114"/>
</dbReference>
<dbReference type="Proteomes" id="UP000001558">
    <property type="component" value="Chromosome"/>
</dbReference>
<dbReference type="GO" id="GO:0005829">
    <property type="term" value="C:cytosol"/>
    <property type="evidence" value="ECO:0007669"/>
    <property type="project" value="TreeGrafter"/>
</dbReference>
<dbReference type="GO" id="GO:0004056">
    <property type="term" value="F:argininosuccinate lyase activity"/>
    <property type="evidence" value="ECO:0007669"/>
    <property type="project" value="UniProtKB-UniRule"/>
</dbReference>
<dbReference type="GO" id="GO:0042450">
    <property type="term" value="P:arginine biosynthetic process via ornithine"/>
    <property type="evidence" value="ECO:0007669"/>
    <property type="project" value="InterPro"/>
</dbReference>
<dbReference type="GO" id="GO:0006526">
    <property type="term" value="P:L-arginine biosynthetic process"/>
    <property type="evidence" value="ECO:0007669"/>
    <property type="project" value="UniProtKB-UniRule"/>
</dbReference>
<dbReference type="CDD" id="cd01359">
    <property type="entry name" value="Argininosuccinate_lyase"/>
    <property type="match status" value="1"/>
</dbReference>
<dbReference type="FunFam" id="1.10.40.30:FF:000001">
    <property type="entry name" value="Argininosuccinate lyase"/>
    <property type="match status" value="1"/>
</dbReference>
<dbReference type="FunFam" id="1.20.200.10:FF:000006">
    <property type="entry name" value="Argininosuccinate lyase"/>
    <property type="match status" value="1"/>
</dbReference>
<dbReference type="Gene3D" id="1.10.40.30">
    <property type="entry name" value="Fumarase/aspartase (C-terminal domain)"/>
    <property type="match status" value="1"/>
</dbReference>
<dbReference type="Gene3D" id="1.20.200.10">
    <property type="entry name" value="Fumarase/aspartase (Central domain)"/>
    <property type="match status" value="1"/>
</dbReference>
<dbReference type="Gene3D" id="1.10.275.10">
    <property type="entry name" value="Fumarase/aspartase (N-terminal domain)"/>
    <property type="match status" value="1"/>
</dbReference>
<dbReference type="HAMAP" id="MF_00006">
    <property type="entry name" value="Arg_succ_lyase"/>
    <property type="match status" value="1"/>
</dbReference>
<dbReference type="InterPro" id="IPR029419">
    <property type="entry name" value="Arg_succ_lyase_C"/>
</dbReference>
<dbReference type="InterPro" id="IPR009049">
    <property type="entry name" value="Argininosuccinate_lyase"/>
</dbReference>
<dbReference type="InterPro" id="IPR024083">
    <property type="entry name" value="Fumarase/histidase_N"/>
</dbReference>
<dbReference type="InterPro" id="IPR020557">
    <property type="entry name" value="Fumarate_lyase_CS"/>
</dbReference>
<dbReference type="InterPro" id="IPR000362">
    <property type="entry name" value="Fumarate_lyase_fam"/>
</dbReference>
<dbReference type="InterPro" id="IPR022761">
    <property type="entry name" value="Fumarate_lyase_N"/>
</dbReference>
<dbReference type="InterPro" id="IPR008948">
    <property type="entry name" value="L-Aspartase-like"/>
</dbReference>
<dbReference type="NCBIfam" id="TIGR00838">
    <property type="entry name" value="argH"/>
    <property type="match status" value="1"/>
</dbReference>
<dbReference type="NCBIfam" id="NF008964">
    <property type="entry name" value="PRK12308.1"/>
    <property type="match status" value="1"/>
</dbReference>
<dbReference type="PANTHER" id="PTHR43814">
    <property type="entry name" value="ARGININOSUCCINATE LYASE"/>
    <property type="match status" value="1"/>
</dbReference>
<dbReference type="PANTHER" id="PTHR43814:SF1">
    <property type="entry name" value="ARGININOSUCCINATE LYASE"/>
    <property type="match status" value="1"/>
</dbReference>
<dbReference type="Pfam" id="PF14698">
    <property type="entry name" value="ASL_C2"/>
    <property type="match status" value="1"/>
</dbReference>
<dbReference type="Pfam" id="PF00206">
    <property type="entry name" value="Lyase_1"/>
    <property type="match status" value="1"/>
</dbReference>
<dbReference type="PRINTS" id="PR00145">
    <property type="entry name" value="ARGSUCLYASE"/>
</dbReference>
<dbReference type="PRINTS" id="PR00149">
    <property type="entry name" value="FUMRATELYASE"/>
</dbReference>
<dbReference type="SUPFAM" id="SSF48557">
    <property type="entry name" value="L-aspartase-like"/>
    <property type="match status" value="1"/>
</dbReference>
<dbReference type="PROSITE" id="PS00163">
    <property type="entry name" value="FUMARATE_LYASES"/>
    <property type="match status" value="1"/>
</dbReference>
<organism>
    <name type="scientific">Shewanella loihica (strain ATCC BAA-1088 / PV-4)</name>
    <dbReference type="NCBI Taxonomy" id="323850"/>
    <lineage>
        <taxon>Bacteria</taxon>
        <taxon>Pseudomonadati</taxon>
        <taxon>Pseudomonadota</taxon>
        <taxon>Gammaproteobacteria</taxon>
        <taxon>Alteromonadales</taxon>
        <taxon>Shewanellaceae</taxon>
        <taxon>Shewanella</taxon>
    </lineage>
</organism>
<reference key="1">
    <citation type="submission" date="2007-03" db="EMBL/GenBank/DDBJ databases">
        <title>Complete sequence of Shewanella loihica PV-4.</title>
        <authorList>
            <consortium name="US DOE Joint Genome Institute"/>
            <person name="Copeland A."/>
            <person name="Lucas S."/>
            <person name="Lapidus A."/>
            <person name="Barry K."/>
            <person name="Detter J.C."/>
            <person name="Glavina del Rio T."/>
            <person name="Hammon N."/>
            <person name="Israni S."/>
            <person name="Dalin E."/>
            <person name="Tice H."/>
            <person name="Pitluck S."/>
            <person name="Chain P."/>
            <person name="Malfatti S."/>
            <person name="Shin M."/>
            <person name="Vergez L."/>
            <person name="Schmutz J."/>
            <person name="Larimer F."/>
            <person name="Land M."/>
            <person name="Hauser L."/>
            <person name="Kyrpides N."/>
            <person name="Mikhailova N."/>
            <person name="Romine M.F."/>
            <person name="Serres G."/>
            <person name="Fredrickson J."/>
            <person name="Tiedje J."/>
            <person name="Richardson P."/>
        </authorList>
    </citation>
    <scope>NUCLEOTIDE SEQUENCE [LARGE SCALE GENOMIC DNA]</scope>
    <source>
        <strain>ATCC BAA-1088 / PV-4</strain>
    </source>
</reference>
<gene>
    <name evidence="1" type="primary">argH</name>
    <name type="ordered locus">Shew_0206</name>
</gene>
<name>ARLY_SHELP</name>
<accession>A3Q9D0</accession>